<evidence type="ECO:0000250" key="1"/>
<evidence type="ECO:0000255" key="2"/>
<evidence type="ECO:0000305" key="3"/>
<gene>
    <name type="primary">pmp3</name>
    <name type="ORF">AFUA_3G12350</name>
</gene>
<name>PMP3_ASPFU</name>
<organism>
    <name type="scientific">Aspergillus fumigatus (strain ATCC MYA-4609 / CBS 101355 / FGSC A1100 / Af293)</name>
    <name type="common">Neosartorya fumigata</name>
    <dbReference type="NCBI Taxonomy" id="330879"/>
    <lineage>
        <taxon>Eukaryota</taxon>
        <taxon>Fungi</taxon>
        <taxon>Dikarya</taxon>
        <taxon>Ascomycota</taxon>
        <taxon>Pezizomycotina</taxon>
        <taxon>Eurotiomycetes</taxon>
        <taxon>Eurotiomycetidae</taxon>
        <taxon>Eurotiales</taxon>
        <taxon>Aspergillaceae</taxon>
        <taxon>Aspergillus</taxon>
        <taxon>Aspergillus subgen. Fumigati</taxon>
    </lineage>
</organism>
<sequence>MPFTASDICKILFAIILPPLGVFLERGCGADLLINICLTILGWIPGIIHAFYIIFKY</sequence>
<protein>
    <recommendedName>
        <fullName>Plasma membrane proteolipid 3</fullName>
    </recommendedName>
</protein>
<dbReference type="EMBL" id="AAHF01000002">
    <property type="protein sequence ID" value="EAL92348.1"/>
    <property type="molecule type" value="Genomic_DNA"/>
</dbReference>
<dbReference type="RefSeq" id="XP_754386.1">
    <property type="nucleotide sequence ID" value="XM_749293.1"/>
</dbReference>
<dbReference type="FunCoup" id="Q4WYA5">
    <property type="interactions" value="1206"/>
</dbReference>
<dbReference type="EnsemblFungi" id="EAL92348">
    <property type="protein sequence ID" value="EAL92348"/>
    <property type="gene ID" value="AFUA_3G12350"/>
</dbReference>
<dbReference type="GeneID" id="3512448"/>
<dbReference type="KEGG" id="afm:AFUA_3G12350"/>
<dbReference type="VEuPathDB" id="FungiDB:Afu3g12350"/>
<dbReference type="eggNOG" id="KOG1773">
    <property type="taxonomic scope" value="Eukaryota"/>
</dbReference>
<dbReference type="HOGENOM" id="CLU_107649_6_2_1"/>
<dbReference type="InParanoid" id="Q4WYA5"/>
<dbReference type="OMA" id="VHAIWVI"/>
<dbReference type="OrthoDB" id="2802411at2759"/>
<dbReference type="Proteomes" id="UP000002530">
    <property type="component" value="Chromosome 3"/>
</dbReference>
<dbReference type="GO" id="GO:0005886">
    <property type="term" value="C:plasma membrane"/>
    <property type="evidence" value="ECO:0007669"/>
    <property type="project" value="UniProtKB-SubCell"/>
</dbReference>
<dbReference type="InterPro" id="IPR000612">
    <property type="entry name" value="PMP3"/>
</dbReference>
<dbReference type="PANTHER" id="PTHR21659">
    <property type="entry name" value="HYDROPHOBIC PROTEIN RCI2 LOW TEMPERATURE AND SALT RESPONSIVE PROTEIN LTI6 -RELATED"/>
    <property type="match status" value="1"/>
</dbReference>
<dbReference type="PANTHER" id="PTHR21659:SF116">
    <property type="entry name" value="PLASMA MEMBRANE PROTEOLIPID 3"/>
    <property type="match status" value="1"/>
</dbReference>
<dbReference type="Pfam" id="PF01679">
    <property type="entry name" value="Pmp3"/>
    <property type="match status" value="1"/>
</dbReference>
<dbReference type="PROSITE" id="PS01309">
    <property type="entry name" value="UPF0057"/>
    <property type="match status" value="1"/>
</dbReference>
<proteinExistence type="inferred from homology"/>
<reference key="1">
    <citation type="journal article" date="2005" name="Nature">
        <title>Genomic sequence of the pathogenic and allergenic filamentous fungus Aspergillus fumigatus.</title>
        <authorList>
            <person name="Nierman W.C."/>
            <person name="Pain A."/>
            <person name="Anderson M.J."/>
            <person name="Wortman J.R."/>
            <person name="Kim H.S."/>
            <person name="Arroyo J."/>
            <person name="Berriman M."/>
            <person name="Abe K."/>
            <person name="Archer D.B."/>
            <person name="Bermejo C."/>
            <person name="Bennett J.W."/>
            <person name="Bowyer P."/>
            <person name="Chen D."/>
            <person name="Collins M."/>
            <person name="Coulsen R."/>
            <person name="Davies R."/>
            <person name="Dyer P.S."/>
            <person name="Farman M.L."/>
            <person name="Fedorova N."/>
            <person name="Fedorova N.D."/>
            <person name="Feldblyum T.V."/>
            <person name="Fischer R."/>
            <person name="Fosker N."/>
            <person name="Fraser A."/>
            <person name="Garcia J.L."/>
            <person name="Garcia M.J."/>
            <person name="Goble A."/>
            <person name="Goldman G.H."/>
            <person name="Gomi K."/>
            <person name="Griffith-Jones S."/>
            <person name="Gwilliam R."/>
            <person name="Haas B.J."/>
            <person name="Haas H."/>
            <person name="Harris D.E."/>
            <person name="Horiuchi H."/>
            <person name="Huang J."/>
            <person name="Humphray S."/>
            <person name="Jimenez J."/>
            <person name="Keller N."/>
            <person name="Khouri H."/>
            <person name="Kitamoto K."/>
            <person name="Kobayashi T."/>
            <person name="Konzack S."/>
            <person name="Kulkarni R."/>
            <person name="Kumagai T."/>
            <person name="Lafton A."/>
            <person name="Latge J.-P."/>
            <person name="Li W."/>
            <person name="Lord A."/>
            <person name="Lu C."/>
            <person name="Majoros W.H."/>
            <person name="May G.S."/>
            <person name="Miller B.L."/>
            <person name="Mohamoud Y."/>
            <person name="Molina M."/>
            <person name="Monod M."/>
            <person name="Mouyna I."/>
            <person name="Mulligan S."/>
            <person name="Murphy L.D."/>
            <person name="O'Neil S."/>
            <person name="Paulsen I."/>
            <person name="Penalva M.A."/>
            <person name="Pertea M."/>
            <person name="Price C."/>
            <person name="Pritchard B.L."/>
            <person name="Quail M.A."/>
            <person name="Rabbinowitsch E."/>
            <person name="Rawlins N."/>
            <person name="Rajandream M.A."/>
            <person name="Reichard U."/>
            <person name="Renauld H."/>
            <person name="Robson G.D."/>
            <person name="Rodriguez de Cordoba S."/>
            <person name="Rodriguez-Pena J.M."/>
            <person name="Ronning C.M."/>
            <person name="Rutter S."/>
            <person name="Salzberg S.L."/>
            <person name="Sanchez M."/>
            <person name="Sanchez-Ferrero J.C."/>
            <person name="Saunders D."/>
            <person name="Seeger K."/>
            <person name="Squares R."/>
            <person name="Squares S."/>
            <person name="Takeuchi M."/>
            <person name="Tekaia F."/>
            <person name="Turner G."/>
            <person name="Vazquez de Aldana C.R."/>
            <person name="Weidman J."/>
            <person name="White O."/>
            <person name="Woodward J.R."/>
            <person name="Yu J.-H."/>
            <person name="Fraser C.M."/>
            <person name="Galagan J.E."/>
            <person name="Asai K."/>
            <person name="Machida M."/>
            <person name="Hall N."/>
            <person name="Barrell B.G."/>
            <person name="Denning D.W."/>
        </authorList>
    </citation>
    <scope>NUCLEOTIDE SEQUENCE [LARGE SCALE GENOMIC DNA]</scope>
    <source>
        <strain>ATCC MYA-4609 / CBS 101355 / FGSC A1100 / Af293</strain>
    </source>
</reference>
<keyword id="KW-1003">Cell membrane</keyword>
<keyword id="KW-0472">Membrane</keyword>
<keyword id="KW-1185">Reference proteome</keyword>
<keyword id="KW-0812">Transmembrane</keyword>
<keyword id="KW-1133">Transmembrane helix</keyword>
<comment type="function">
    <text evidence="1">Plays a role in the regulation of membrane potential. Could mediate a proton leak (By similarity).</text>
</comment>
<comment type="subcellular location">
    <subcellularLocation>
        <location evidence="3">Cell membrane</location>
        <topology evidence="3">Single-pass membrane protein</topology>
    </subcellularLocation>
</comment>
<comment type="similarity">
    <text evidence="3">Belongs to the UPF0057 (PMP3) family.</text>
</comment>
<feature type="chain" id="PRO_0000247908" description="Plasma membrane proteolipid 3">
    <location>
        <begin position="1"/>
        <end position="57"/>
    </location>
</feature>
<feature type="transmembrane region" description="Helical" evidence="2">
    <location>
        <begin position="34"/>
        <end position="54"/>
    </location>
</feature>
<accession>Q4WYA5</accession>